<protein>
    <recommendedName>
        <fullName evidence="2">Glucose-1-phosphate adenylyltransferase</fullName>
        <ecNumber evidence="2">2.7.7.27</ecNumber>
    </recommendedName>
    <alternativeName>
        <fullName evidence="2">ADP-glucose pyrophosphorylase</fullName>
        <shortName evidence="2">ADPGlc PPase</shortName>
    </alternativeName>
    <alternativeName>
        <fullName evidence="2">ADP-glucose synthase</fullName>
    </alternativeName>
</protein>
<comment type="function">
    <text evidence="2">Involved in the biosynthesis of ADP-glucose, a building block required for the elongation reactions to produce glycogen. Catalyzes the reaction between ATP and alpha-D-glucose 1-phosphate (G1P) to produce pyrophosphate and ADP-Glc.</text>
</comment>
<comment type="catalytic activity">
    <reaction evidence="2">
        <text>alpha-D-glucose 1-phosphate + ATP + H(+) = ADP-alpha-D-glucose + diphosphate</text>
        <dbReference type="Rhea" id="RHEA:12120"/>
        <dbReference type="ChEBI" id="CHEBI:15378"/>
        <dbReference type="ChEBI" id="CHEBI:30616"/>
        <dbReference type="ChEBI" id="CHEBI:33019"/>
        <dbReference type="ChEBI" id="CHEBI:57498"/>
        <dbReference type="ChEBI" id="CHEBI:58601"/>
        <dbReference type="EC" id="2.7.7.27"/>
    </reaction>
</comment>
<comment type="activity regulation">
    <text evidence="2">Allosterically activated by fructose-1,6-bisphosphate (F16BP) and inhibited by AMP.</text>
</comment>
<comment type="pathway">
    <text evidence="2">Glycan biosynthesis; glycogen biosynthesis.</text>
</comment>
<comment type="subunit">
    <text evidence="2">Homotetramer.</text>
</comment>
<comment type="similarity">
    <text evidence="2">Belongs to the bacterial/plant glucose-1-phosphate adenylyltransferase family.</text>
</comment>
<comment type="sequence caution" evidence="3">
    <conflict type="erroneous initiation">
        <sequence resource="EMBL-CDS" id="AAN82655"/>
    </conflict>
</comment>
<sequence length="431" mass="48698">MVSLEKNDHLMLARQLPLKSVALILAGGRGTRLKDLTNKRAKPAVHFGGKFRIIDFALSNCINSGIRRMGVITQYQSHTLVQHIQRGWSFFNEEMNEFVDLLPAQQRMKGENWYRGTADAVTQNLDIIRRYKAEYVVILAGDHIYKQDYSRMLIDHVEKGARCTVACMPVPIEEASAFGVMAVDENDKIIEFVEKPANPPSMPNDPSKSLASMGIYVFDADYLYELLEEDDRDENSSHDFGKDLIPKITEAGLAYAHPFPLSCVQSDPDAEPYWRDVGTLEAYWKANLDLASVVPELDMYDRNWPIRTYNESLPPAKFVQDRSGSHGMTLNSLVSGGCVISGSVVVQSVLFSRVRVNSFCNIDSAVLLPEVWVGRSCRLRRCVIDRACVIPEGMVIGENAEEDARRFYRSEEGIVLVTREMLRKLGHKQER</sequence>
<proteinExistence type="inferred from homology"/>
<name>GLGC_ECOL6</name>
<reference key="1">
    <citation type="journal article" date="2002" name="Proc. Natl. Acad. Sci. U.S.A.">
        <title>Extensive mosaic structure revealed by the complete genome sequence of uropathogenic Escherichia coli.</title>
        <authorList>
            <person name="Welch R.A."/>
            <person name="Burland V."/>
            <person name="Plunkett G. III"/>
            <person name="Redford P."/>
            <person name="Roesch P."/>
            <person name="Rasko D."/>
            <person name="Buckles E.L."/>
            <person name="Liou S.-R."/>
            <person name="Boutin A."/>
            <person name="Hackett J."/>
            <person name="Stroud D."/>
            <person name="Mayhew G.F."/>
            <person name="Rose D.J."/>
            <person name="Zhou S."/>
            <person name="Schwartz D.C."/>
            <person name="Perna N.T."/>
            <person name="Mobley H.L.T."/>
            <person name="Donnenberg M.S."/>
            <person name="Blattner F.R."/>
        </authorList>
    </citation>
    <scope>NUCLEOTIDE SEQUENCE [LARGE SCALE GENOMIC DNA]</scope>
    <source>
        <strain>CFT073 / ATCC 700928 / UPEC</strain>
    </source>
</reference>
<evidence type="ECO:0000250" key="1"/>
<evidence type="ECO:0000255" key="2">
    <source>
        <dbReference type="HAMAP-Rule" id="MF_00624"/>
    </source>
</evidence>
<evidence type="ECO:0000305" key="3"/>
<dbReference type="EC" id="2.7.7.27" evidence="2"/>
<dbReference type="EMBL" id="AE014075">
    <property type="protein sequence ID" value="AAN82655.1"/>
    <property type="status" value="ALT_INIT"/>
    <property type="molecule type" value="Genomic_DNA"/>
</dbReference>
<dbReference type="RefSeq" id="WP_000253975.1">
    <property type="nucleotide sequence ID" value="NZ_CP051263.1"/>
</dbReference>
<dbReference type="SMR" id="P0A6V2"/>
<dbReference type="STRING" id="199310.c4217"/>
<dbReference type="GeneID" id="93778559"/>
<dbReference type="KEGG" id="ecc:c4217"/>
<dbReference type="eggNOG" id="COG0448">
    <property type="taxonomic scope" value="Bacteria"/>
</dbReference>
<dbReference type="HOGENOM" id="CLU_029499_14_1_6"/>
<dbReference type="UniPathway" id="UPA00164"/>
<dbReference type="Proteomes" id="UP000001410">
    <property type="component" value="Chromosome"/>
</dbReference>
<dbReference type="GO" id="GO:0005524">
    <property type="term" value="F:ATP binding"/>
    <property type="evidence" value="ECO:0007669"/>
    <property type="project" value="UniProtKB-KW"/>
</dbReference>
<dbReference type="GO" id="GO:0008878">
    <property type="term" value="F:glucose-1-phosphate adenylyltransferase activity"/>
    <property type="evidence" value="ECO:0007669"/>
    <property type="project" value="UniProtKB-UniRule"/>
</dbReference>
<dbReference type="GO" id="GO:0005978">
    <property type="term" value="P:glycogen biosynthetic process"/>
    <property type="evidence" value="ECO:0007669"/>
    <property type="project" value="UniProtKB-UniRule"/>
</dbReference>
<dbReference type="CDD" id="cd02508">
    <property type="entry name" value="ADP_Glucose_PP"/>
    <property type="match status" value="1"/>
</dbReference>
<dbReference type="CDD" id="cd04651">
    <property type="entry name" value="LbH_G1P_AT_C"/>
    <property type="match status" value="1"/>
</dbReference>
<dbReference type="FunFam" id="2.160.10.10:FF:000006">
    <property type="entry name" value="Glucose-1-phosphate adenylyltransferase"/>
    <property type="match status" value="1"/>
</dbReference>
<dbReference type="FunFam" id="3.90.550.10:FF:000014">
    <property type="entry name" value="Glucose-1-phosphate adenylyltransferase"/>
    <property type="match status" value="1"/>
</dbReference>
<dbReference type="Gene3D" id="2.160.10.10">
    <property type="entry name" value="Hexapeptide repeat proteins"/>
    <property type="match status" value="1"/>
</dbReference>
<dbReference type="Gene3D" id="3.90.550.10">
    <property type="entry name" value="Spore Coat Polysaccharide Biosynthesis Protein SpsA, Chain A"/>
    <property type="match status" value="1"/>
</dbReference>
<dbReference type="HAMAP" id="MF_00624">
    <property type="entry name" value="GlgC"/>
    <property type="match status" value="1"/>
</dbReference>
<dbReference type="InterPro" id="IPR011831">
    <property type="entry name" value="ADP-Glc_PPase"/>
</dbReference>
<dbReference type="InterPro" id="IPR005836">
    <property type="entry name" value="ADP_Glu_pyroP_CS"/>
</dbReference>
<dbReference type="InterPro" id="IPR023049">
    <property type="entry name" value="GlgC_bac"/>
</dbReference>
<dbReference type="InterPro" id="IPR056818">
    <property type="entry name" value="GlmU/GlgC-like_hexapep"/>
</dbReference>
<dbReference type="InterPro" id="IPR005835">
    <property type="entry name" value="NTP_transferase_dom"/>
</dbReference>
<dbReference type="InterPro" id="IPR029044">
    <property type="entry name" value="Nucleotide-diphossugar_trans"/>
</dbReference>
<dbReference type="InterPro" id="IPR011004">
    <property type="entry name" value="Trimer_LpxA-like_sf"/>
</dbReference>
<dbReference type="NCBIfam" id="TIGR02091">
    <property type="entry name" value="glgC"/>
    <property type="match status" value="1"/>
</dbReference>
<dbReference type="NCBIfam" id="NF001947">
    <property type="entry name" value="PRK00725.1"/>
    <property type="match status" value="1"/>
</dbReference>
<dbReference type="NCBIfam" id="NF002023">
    <property type="entry name" value="PRK00844.1"/>
    <property type="match status" value="1"/>
</dbReference>
<dbReference type="PANTHER" id="PTHR43523:SF2">
    <property type="entry name" value="GLUCOSE-1-PHOSPHATE ADENYLYLTRANSFERASE"/>
    <property type="match status" value="1"/>
</dbReference>
<dbReference type="PANTHER" id="PTHR43523">
    <property type="entry name" value="GLUCOSE-1-PHOSPHATE ADENYLYLTRANSFERASE-RELATED"/>
    <property type="match status" value="1"/>
</dbReference>
<dbReference type="Pfam" id="PF24894">
    <property type="entry name" value="Hexapep_GlmU"/>
    <property type="match status" value="1"/>
</dbReference>
<dbReference type="Pfam" id="PF00483">
    <property type="entry name" value="NTP_transferase"/>
    <property type="match status" value="1"/>
</dbReference>
<dbReference type="SUPFAM" id="SSF53448">
    <property type="entry name" value="Nucleotide-diphospho-sugar transferases"/>
    <property type="match status" value="1"/>
</dbReference>
<dbReference type="SUPFAM" id="SSF51161">
    <property type="entry name" value="Trimeric LpxA-like enzymes"/>
    <property type="match status" value="1"/>
</dbReference>
<dbReference type="PROSITE" id="PS00808">
    <property type="entry name" value="ADP_GLC_PYROPHOSPH_1"/>
    <property type="match status" value="1"/>
</dbReference>
<dbReference type="PROSITE" id="PS00809">
    <property type="entry name" value="ADP_GLC_PYROPHOSPH_2"/>
    <property type="match status" value="1"/>
</dbReference>
<dbReference type="PROSITE" id="PS00810">
    <property type="entry name" value="ADP_GLC_PYROPHOSPH_3"/>
    <property type="match status" value="1"/>
</dbReference>
<keyword id="KW-0021">Allosteric enzyme</keyword>
<keyword id="KW-0067">ATP-binding</keyword>
<keyword id="KW-0119">Carbohydrate metabolism</keyword>
<keyword id="KW-0320">Glycogen biosynthesis</keyword>
<keyword id="KW-0321">Glycogen metabolism</keyword>
<keyword id="KW-0547">Nucleotide-binding</keyword>
<keyword id="KW-0548">Nucleotidyltransferase</keyword>
<keyword id="KW-1185">Reference proteome</keyword>
<keyword id="KW-0808">Transferase</keyword>
<feature type="initiator methionine" description="Removed" evidence="1">
    <location>
        <position position="1"/>
    </location>
</feature>
<feature type="chain" id="PRO_0000195295" description="Glucose-1-phosphate adenylyltransferase">
    <location>
        <begin position="2"/>
        <end position="431"/>
    </location>
</feature>
<feature type="binding site" evidence="2">
    <location>
        <position position="39"/>
    </location>
    <ligand>
        <name>beta-D-fructose 1,6-bisphosphate</name>
        <dbReference type="ChEBI" id="CHEBI:32966"/>
    </ligand>
</feature>
<feature type="binding site" evidence="2">
    <location>
        <position position="40"/>
    </location>
    <ligand>
        <name>AMP</name>
        <dbReference type="ChEBI" id="CHEBI:456215"/>
    </ligand>
</feature>
<feature type="binding site" evidence="2">
    <location>
        <position position="46"/>
    </location>
    <ligand>
        <name>AMP</name>
        <dbReference type="ChEBI" id="CHEBI:456215"/>
    </ligand>
</feature>
<feature type="binding site" evidence="2">
    <location>
        <position position="52"/>
    </location>
    <ligand>
        <name>AMP</name>
        <dbReference type="ChEBI" id="CHEBI:456215"/>
    </ligand>
</feature>
<feature type="binding site" evidence="2">
    <location>
        <position position="114"/>
    </location>
    <ligand>
        <name>alpha-D-glucose 1-phosphate</name>
        <dbReference type="ChEBI" id="CHEBI:58601"/>
    </ligand>
</feature>
<feature type="binding site" evidence="2">
    <location>
        <position position="130"/>
    </location>
    <ligand>
        <name>AMP</name>
        <dbReference type="ChEBI" id="CHEBI:456215"/>
    </ligand>
</feature>
<feature type="binding site" evidence="2">
    <location>
        <position position="179"/>
    </location>
    <ligand>
        <name>alpha-D-glucose 1-phosphate</name>
        <dbReference type="ChEBI" id="CHEBI:58601"/>
    </ligand>
</feature>
<feature type="binding site" evidence="2">
    <location>
        <begin position="194"/>
        <end position="195"/>
    </location>
    <ligand>
        <name>alpha-D-glucose 1-phosphate</name>
        <dbReference type="ChEBI" id="CHEBI:58601"/>
    </ligand>
</feature>
<feature type="binding site" evidence="2">
    <location>
        <position position="212"/>
    </location>
    <ligand>
        <name>alpha-D-glucose 1-phosphate</name>
        <dbReference type="ChEBI" id="CHEBI:58601"/>
    </ligand>
</feature>
<feature type="binding site" evidence="2">
    <location>
        <position position="370"/>
    </location>
    <ligand>
        <name>AMP</name>
        <dbReference type="ChEBI" id="CHEBI:456215"/>
    </ligand>
</feature>
<feature type="binding site" evidence="2">
    <location>
        <position position="386"/>
    </location>
    <ligand>
        <name>AMP</name>
        <dbReference type="ChEBI" id="CHEBI:456215"/>
    </ligand>
</feature>
<feature type="binding site" evidence="2">
    <location>
        <begin position="419"/>
        <end position="423"/>
    </location>
    <ligand>
        <name>beta-D-fructose 1,6-bisphosphate</name>
        <dbReference type="ChEBI" id="CHEBI:32966"/>
    </ligand>
</feature>
<feature type="binding site" evidence="2">
    <location>
        <begin position="429"/>
        <end position="431"/>
    </location>
    <ligand>
        <name>beta-D-fructose 1,6-bisphosphate</name>
        <dbReference type="ChEBI" id="CHEBI:32966"/>
    </ligand>
</feature>
<feature type="site" description="Could play a key role in the communication between the regulatory and the substrate sites" evidence="2">
    <location>
        <position position="74"/>
    </location>
</feature>
<feature type="site" description="Could play a key role in the communication between the regulatory and the substrate sites" evidence="2">
    <location>
        <position position="113"/>
    </location>
</feature>
<gene>
    <name evidence="2" type="primary">glgC</name>
    <name type="ordered locus">c4217</name>
</gene>
<accession>P0A6V2</accession>
<accession>P00584</accession>
<organism>
    <name type="scientific">Escherichia coli O6:H1 (strain CFT073 / ATCC 700928 / UPEC)</name>
    <dbReference type="NCBI Taxonomy" id="199310"/>
    <lineage>
        <taxon>Bacteria</taxon>
        <taxon>Pseudomonadati</taxon>
        <taxon>Pseudomonadota</taxon>
        <taxon>Gammaproteobacteria</taxon>
        <taxon>Enterobacterales</taxon>
        <taxon>Enterobacteriaceae</taxon>
        <taxon>Escherichia</taxon>
    </lineage>
</organism>